<keyword id="KW-0067">ATP-binding</keyword>
<keyword id="KW-0436">Ligase</keyword>
<keyword id="KW-0460">Magnesium</keyword>
<keyword id="KW-0479">Metal-binding</keyword>
<keyword id="KW-0547">Nucleotide-binding</keyword>
<keyword id="KW-1185">Reference proteome</keyword>
<keyword id="KW-0816">Tricarboxylic acid cycle</keyword>
<evidence type="ECO:0000255" key="1">
    <source>
        <dbReference type="HAMAP-Rule" id="MF_00558"/>
    </source>
</evidence>
<feature type="chain" id="PRO_1000082108" description="Succinate--CoA ligase [ADP-forming] subunit beta">
    <location>
        <begin position="1"/>
        <end position="376"/>
    </location>
</feature>
<feature type="domain" description="ATP-grasp" evidence="1">
    <location>
        <begin position="9"/>
        <end position="234"/>
    </location>
</feature>
<feature type="binding site" evidence="1">
    <location>
        <position position="45"/>
    </location>
    <ligand>
        <name>ATP</name>
        <dbReference type="ChEBI" id="CHEBI:30616"/>
    </ligand>
</feature>
<feature type="binding site" evidence="1">
    <location>
        <begin position="52"/>
        <end position="54"/>
    </location>
    <ligand>
        <name>ATP</name>
        <dbReference type="ChEBI" id="CHEBI:30616"/>
    </ligand>
</feature>
<feature type="binding site" evidence="1">
    <location>
        <position position="91"/>
    </location>
    <ligand>
        <name>ATP</name>
        <dbReference type="ChEBI" id="CHEBI:30616"/>
    </ligand>
</feature>
<feature type="binding site" evidence="1">
    <location>
        <position position="94"/>
    </location>
    <ligand>
        <name>ATP</name>
        <dbReference type="ChEBI" id="CHEBI:30616"/>
    </ligand>
</feature>
<feature type="binding site" evidence="1">
    <location>
        <position position="99"/>
    </location>
    <ligand>
        <name>ATP</name>
        <dbReference type="ChEBI" id="CHEBI:30616"/>
    </ligand>
</feature>
<feature type="binding site" evidence="1">
    <location>
        <position position="191"/>
    </location>
    <ligand>
        <name>Mg(2+)</name>
        <dbReference type="ChEBI" id="CHEBI:18420"/>
    </ligand>
</feature>
<feature type="binding site" evidence="1">
    <location>
        <position position="204"/>
    </location>
    <ligand>
        <name>Mg(2+)</name>
        <dbReference type="ChEBI" id="CHEBI:18420"/>
    </ligand>
</feature>
<feature type="binding site" evidence="1">
    <location>
        <position position="254"/>
    </location>
    <ligand>
        <name>substrate</name>
        <note>ligand shared with subunit alpha</note>
    </ligand>
</feature>
<feature type="binding site" evidence="1">
    <location>
        <begin position="311"/>
        <end position="313"/>
    </location>
    <ligand>
        <name>substrate</name>
        <note>ligand shared with subunit alpha</note>
    </ligand>
</feature>
<proteinExistence type="inferred from homology"/>
<name>SUCC_IGNH4</name>
<reference key="1">
    <citation type="journal article" date="2008" name="Genome Biol.">
        <title>A genomic analysis of the archaeal system Ignicoccus hospitalis-Nanoarchaeum equitans.</title>
        <authorList>
            <person name="Podar M."/>
            <person name="Anderson I."/>
            <person name="Makarova K.S."/>
            <person name="Elkins J.G."/>
            <person name="Ivanova N."/>
            <person name="Wall M.A."/>
            <person name="Lykidis A."/>
            <person name="Mavromatis K."/>
            <person name="Sun H."/>
            <person name="Hudson M.E."/>
            <person name="Chen W."/>
            <person name="Deciu C."/>
            <person name="Hutchison D."/>
            <person name="Eads J.R."/>
            <person name="Anderson A."/>
            <person name="Fernandes F."/>
            <person name="Szeto E."/>
            <person name="Lapidus A."/>
            <person name="Kyrpides N.C."/>
            <person name="Saier M.H. Jr."/>
            <person name="Richardson P.M."/>
            <person name="Rachel R."/>
            <person name="Huber H."/>
            <person name="Eisen J.A."/>
            <person name="Koonin E.V."/>
            <person name="Keller M."/>
            <person name="Stetter K.O."/>
        </authorList>
    </citation>
    <scope>NUCLEOTIDE SEQUENCE [LARGE SCALE GENOMIC DNA]</scope>
    <source>
        <strain>KIN4/I / DSM 18386 / JCM 14125</strain>
    </source>
</reference>
<sequence>MNLLEYEAKAIAKKYGIPTPEGVLIERPEQVNEAVEKLGLPVVLKAQVPVAGRGKAGGVKLARDPDEALELAEELFSKEIKGFPVLSLLVEKAENIQKELYLSFTIDRTNRKVVMLASAEGGMEIEELAKEKPDAIVKLPIEPEVGLKAHEAREVGKRIGLSGQLLRQFEGIAKTMYKIFEDYDAELVESNPLAITDRGLVALDFRMIVDDNAIFRHPELEASRERELSELEKEAARWGFFYVELDGDIGIIGNGAGLTMATMDVVNYYGGRPANFLDIGGGARRDRVKAAVNVLLKNPKVKVIFVNIFGGITLASEVAQGIVDALSESNVKKPIVARIVGTAEEEGKKILKEAGIPLFESMDEAAQEAVKLAKAA</sequence>
<accession>A8A8L8</accession>
<gene>
    <name evidence="1" type="primary">sucC</name>
    <name type="ordered locus">Igni_0086</name>
</gene>
<organism>
    <name type="scientific">Ignicoccus hospitalis (strain KIN4/I / DSM 18386 / JCM 14125)</name>
    <dbReference type="NCBI Taxonomy" id="453591"/>
    <lineage>
        <taxon>Archaea</taxon>
        <taxon>Thermoproteota</taxon>
        <taxon>Thermoprotei</taxon>
        <taxon>Desulfurococcales</taxon>
        <taxon>Desulfurococcaceae</taxon>
        <taxon>Ignicoccus</taxon>
    </lineage>
</organism>
<protein>
    <recommendedName>
        <fullName evidence="1">Succinate--CoA ligase [ADP-forming] subunit beta</fullName>
        <ecNumber evidence="1">6.2.1.5</ecNumber>
    </recommendedName>
    <alternativeName>
        <fullName evidence="1">Succinyl-CoA synthetase subunit beta</fullName>
        <shortName evidence="1">SCS-beta</shortName>
    </alternativeName>
</protein>
<comment type="function">
    <text evidence="1">Succinyl-CoA synthetase functions in the citric acid cycle (TCA), coupling the hydrolysis of succinyl-CoA to the synthesis of either ATP or GTP and thus represents the only step of substrate-level phosphorylation in the TCA. The beta subunit provides nucleotide specificity of the enzyme and binds the substrate succinate, while the binding sites for coenzyme A and phosphate are found in the alpha subunit.</text>
</comment>
<comment type="catalytic activity">
    <reaction evidence="1">
        <text>succinate + ATP + CoA = succinyl-CoA + ADP + phosphate</text>
        <dbReference type="Rhea" id="RHEA:17661"/>
        <dbReference type="ChEBI" id="CHEBI:30031"/>
        <dbReference type="ChEBI" id="CHEBI:30616"/>
        <dbReference type="ChEBI" id="CHEBI:43474"/>
        <dbReference type="ChEBI" id="CHEBI:57287"/>
        <dbReference type="ChEBI" id="CHEBI:57292"/>
        <dbReference type="ChEBI" id="CHEBI:456216"/>
        <dbReference type="EC" id="6.2.1.5"/>
    </reaction>
    <physiologicalReaction direction="right-to-left" evidence="1">
        <dbReference type="Rhea" id="RHEA:17663"/>
    </physiologicalReaction>
</comment>
<comment type="catalytic activity">
    <reaction evidence="1">
        <text>GTP + succinate + CoA = succinyl-CoA + GDP + phosphate</text>
        <dbReference type="Rhea" id="RHEA:22120"/>
        <dbReference type="ChEBI" id="CHEBI:30031"/>
        <dbReference type="ChEBI" id="CHEBI:37565"/>
        <dbReference type="ChEBI" id="CHEBI:43474"/>
        <dbReference type="ChEBI" id="CHEBI:57287"/>
        <dbReference type="ChEBI" id="CHEBI:57292"/>
        <dbReference type="ChEBI" id="CHEBI:58189"/>
    </reaction>
    <physiologicalReaction direction="right-to-left" evidence="1">
        <dbReference type="Rhea" id="RHEA:22122"/>
    </physiologicalReaction>
</comment>
<comment type="cofactor">
    <cofactor evidence="1">
        <name>Mg(2+)</name>
        <dbReference type="ChEBI" id="CHEBI:18420"/>
    </cofactor>
    <text evidence="1">Binds 1 Mg(2+) ion per subunit.</text>
</comment>
<comment type="pathway">
    <text evidence="1">Carbohydrate metabolism; tricarboxylic acid cycle; succinate from succinyl-CoA (ligase route): step 1/1.</text>
</comment>
<comment type="subunit">
    <text evidence="1">Heterotetramer of two alpha and two beta subunits.</text>
</comment>
<comment type="similarity">
    <text evidence="1">Belongs to the succinate/malate CoA ligase beta subunit family.</text>
</comment>
<dbReference type="EC" id="6.2.1.5" evidence="1"/>
<dbReference type="EMBL" id="CP000816">
    <property type="protein sequence ID" value="ABU81270.1"/>
    <property type="molecule type" value="Genomic_DNA"/>
</dbReference>
<dbReference type="RefSeq" id="WP_011998122.1">
    <property type="nucleotide sequence ID" value="NC_009776.1"/>
</dbReference>
<dbReference type="SMR" id="A8A8L8"/>
<dbReference type="STRING" id="453591.Igni_0086"/>
<dbReference type="GeneID" id="5562142"/>
<dbReference type="KEGG" id="iho:Igni_0086"/>
<dbReference type="eggNOG" id="arCOG01337">
    <property type="taxonomic scope" value="Archaea"/>
</dbReference>
<dbReference type="HOGENOM" id="CLU_037430_0_2_2"/>
<dbReference type="OrthoDB" id="146449at2157"/>
<dbReference type="PhylomeDB" id="A8A8L8"/>
<dbReference type="UniPathway" id="UPA00223">
    <property type="reaction ID" value="UER00999"/>
</dbReference>
<dbReference type="Proteomes" id="UP000000262">
    <property type="component" value="Chromosome"/>
</dbReference>
<dbReference type="GO" id="GO:0042709">
    <property type="term" value="C:succinate-CoA ligase complex"/>
    <property type="evidence" value="ECO:0007669"/>
    <property type="project" value="TreeGrafter"/>
</dbReference>
<dbReference type="GO" id="GO:0005524">
    <property type="term" value="F:ATP binding"/>
    <property type="evidence" value="ECO:0007669"/>
    <property type="project" value="UniProtKB-UniRule"/>
</dbReference>
<dbReference type="GO" id="GO:0000287">
    <property type="term" value="F:magnesium ion binding"/>
    <property type="evidence" value="ECO:0007669"/>
    <property type="project" value="UniProtKB-UniRule"/>
</dbReference>
<dbReference type="GO" id="GO:0004775">
    <property type="term" value="F:succinate-CoA ligase (ADP-forming) activity"/>
    <property type="evidence" value="ECO:0007669"/>
    <property type="project" value="UniProtKB-UniRule"/>
</dbReference>
<dbReference type="GO" id="GO:0004776">
    <property type="term" value="F:succinate-CoA ligase (GDP-forming) activity"/>
    <property type="evidence" value="ECO:0007669"/>
    <property type="project" value="RHEA"/>
</dbReference>
<dbReference type="GO" id="GO:0006104">
    <property type="term" value="P:succinyl-CoA metabolic process"/>
    <property type="evidence" value="ECO:0007669"/>
    <property type="project" value="TreeGrafter"/>
</dbReference>
<dbReference type="GO" id="GO:0006099">
    <property type="term" value="P:tricarboxylic acid cycle"/>
    <property type="evidence" value="ECO:0007669"/>
    <property type="project" value="UniProtKB-UniRule"/>
</dbReference>
<dbReference type="FunFam" id="3.30.470.20:FF:000002">
    <property type="entry name" value="Succinate--CoA ligase [ADP-forming] subunit beta"/>
    <property type="match status" value="1"/>
</dbReference>
<dbReference type="FunFam" id="3.40.50.261:FF:000007">
    <property type="entry name" value="Succinate--CoA ligase [ADP-forming] subunit beta"/>
    <property type="match status" value="1"/>
</dbReference>
<dbReference type="Gene3D" id="3.30.1490.20">
    <property type="entry name" value="ATP-grasp fold, A domain"/>
    <property type="match status" value="1"/>
</dbReference>
<dbReference type="Gene3D" id="3.30.470.20">
    <property type="entry name" value="ATP-grasp fold, B domain"/>
    <property type="match status" value="1"/>
</dbReference>
<dbReference type="Gene3D" id="3.40.50.261">
    <property type="entry name" value="Succinyl-CoA synthetase domains"/>
    <property type="match status" value="1"/>
</dbReference>
<dbReference type="HAMAP" id="MF_00558">
    <property type="entry name" value="Succ_CoA_beta"/>
    <property type="match status" value="1"/>
</dbReference>
<dbReference type="InterPro" id="IPR011761">
    <property type="entry name" value="ATP-grasp"/>
</dbReference>
<dbReference type="InterPro" id="IPR013650">
    <property type="entry name" value="ATP-grasp_succ-CoA_synth-type"/>
</dbReference>
<dbReference type="InterPro" id="IPR013815">
    <property type="entry name" value="ATP_grasp_subdomain_1"/>
</dbReference>
<dbReference type="InterPro" id="IPR017866">
    <property type="entry name" value="Succ-CoA_synthase_bsu_CS"/>
</dbReference>
<dbReference type="InterPro" id="IPR005811">
    <property type="entry name" value="SUCC_ACL_C"/>
</dbReference>
<dbReference type="InterPro" id="IPR005809">
    <property type="entry name" value="Succ_CoA_ligase-like_bsu"/>
</dbReference>
<dbReference type="InterPro" id="IPR016102">
    <property type="entry name" value="Succinyl-CoA_synth-like"/>
</dbReference>
<dbReference type="NCBIfam" id="NF001913">
    <property type="entry name" value="PRK00696.1"/>
    <property type="match status" value="1"/>
</dbReference>
<dbReference type="NCBIfam" id="TIGR01016">
    <property type="entry name" value="sucCoAbeta"/>
    <property type="match status" value="1"/>
</dbReference>
<dbReference type="PANTHER" id="PTHR11815:SF10">
    <property type="entry name" value="SUCCINATE--COA LIGASE [GDP-FORMING] SUBUNIT BETA, MITOCHONDRIAL"/>
    <property type="match status" value="1"/>
</dbReference>
<dbReference type="PANTHER" id="PTHR11815">
    <property type="entry name" value="SUCCINYL-COA SYNTHETASE BETA CHAIN"/>
    <property type="match status" value="1"/>
</dbReference>
<dbReference type="Pfam" id="PF08442">
    <property type="entry name" value="ATP-grasp_2"/>
    <property type="match status" value="1"/>
</dbReference>
<dbReference type="Pfam" id="PF00549">
    <property type="entry name" value="Ligase_CoA"/>
    <property type="match status" value="1"/>
</dbReference>
<dbReference type="PIRSF" id="PIRSF001554">
    <property type="entry name" value="SucCS_beta"/>
    <property type="match status" value="1"/>
</dbReference>
<dbReference type="SUPFAM" id="SSF56059">
    <property type="entry name" value="Glutathione synthetase ATP-binding domain-like"/>
    <property type="match status" value="1"/>
</dbReference>
<dbReference type="SUPFAM" id="SSF52210">
    <property type="entry name" value="Succinyl-CoA synthetase domains"/>
    <property type="match status" value="1"/>
</dbReference>
<dbReference type="PROSITE" id="PS50975">
    <property type="entry name" value="ATP_GRASP"/>
    <property type="match status" value="1"/>
</dbReference>
<dbReference type="PROSITE" id="PS01217">
    <property type="entry name" value="SUCCINYL_COA_LIG_3"/>
    <property type="match status" value="1"/>
</dbReference>